<gene>
    <name evidence="1" type="primary">ileS</name>
    <name type="ordered locus">Ddes_0385</name>
</gene>
<name>SYI_DESDA</name>
<dbReference type="EC" id="6.1.1.5" evidence="1"/>
<dbReference type="EMBL" id="CP001358">
    <property type="protein sequence ID" value="ACL48298.1"/>
    <property type="molecule type" value="Genomic_DNA"/>
</dbReference>
<dbReference type="SMR" id="B8J3R3"/>
<dbReference type="STRING" id="525146.Ddes_0385"/>
<dbReference type="KEGG" id="dds:Ddes_0385"/>
<dbReference type="eggNOG" id="COG0060">
    <property type="taxonomic scope" value="Bacteria"/>
</dbReference>
<dbReference type="HOGENOM" id="CLU_001493_7_0_7"/>
<dbReference type="GO" id="GO:0005829">
    <property type="term" value="C:cytosol"/>
    <property type="evidence" value="ECO:0007669"/>
    <property type="project" value="TreeGrafter"/>
</dbReference>
<dbReference type="GO" id="GO:0002161">
    <property type="term" value="F:aminoacyl-tRNA deacylase activity"/>
    <property type="evidence" value="ECO:0007669"/>
    <property type="project" value="InterPro"/>
</dbReference>
<dbReference type="GO" id="GO:0005524">
    <property type="term" value="F:ATP binding"/>
    <property type="evidence" value="ECO:0007669"/>
    <property type="project" value="UniProtKB-UniRule"/>
</dbReference>
<dbReference type="GO" id="GO:0004822">
    <property type="term" value="F:isoleucine-tRNA ligase activity"/>
    <property type="evidence" value="ECO:0007669"/>
    <property type="project" value="UniProtKB-UniRule"/>
</dbReference>
<dbReference type="GO" id="GO:0000049">
    <property type="term" value="F:tRNA binding"/>
    <property type="evidence" value="ECO:0007669"/>
    <property type="project" value="InterPro"/>
</dbReference>
<dbReference type="GO" id="GO:0008270">
    <property type="term" value="F:zinc ion binding"/>
    <property type="evidence" value="ECO:0007669"/>
    <property type="project" value="UniProtKB-UniRule"/>
</dbReference>
<dbReference type="GO" id="GO:0006428">
    <property type="term" value="P:isoleucyl-tRNA aminoacylation"/>
    <property type="evidence" value="ECO:0007669"/>
    <property type="project" value="UniProtKB-UniRule"/>
</dbReference>
<dbReference type="CDD" id="cd07960">
    <property type="entry name" value="Anticodon_Ia_Ile_BEm"/>
    <property type="match status" value="1"/>
</dbReference>
<dbReference type="CDD" id="cd00818">
    <property type="entry name" value="IleRS_core"/>
    <property type="match status" value="1"/>
</dbReference>
<dbReference type="Gene3D" id="1.10.730.20">
    <property type="match status" value="1"/>
</dbReference>
<dbReference type="Gene3D" id="3.40.50.620">
    <property type="entry name" value="HUPs"/>
    <property type="match status" value="2"/>
</dbReference>
<dbReference type="Gene3D" id="1.10.10.830">
    <property type="entry name" value="Ile-tRNA synthetase CP2 domain-like"/>
    <property type="match status" value="1"/>
</dbReference>
<dbReference type="Gene3D" id="3.90.740.10">
    <property type="entry name" value="Valyl/Leucyl/Isoleucyl-tRNA synthetase, editing domain"/>
    <property type="match status" value="1"/>
</dbReference>
<dbReference type="HAMAP" id="MF_02002">
    <property type="entry name" value="Ile_tRNA_synth_type1"/>
    <property type="match status" value="1"/>
</dbReference>
<dbReference type="InterPro" id="IPR001412">
    <property type="entry name" value="aa-tRNA-synth_I_CS"/>
</dbReference>
<dbReference type="InterPro" id="IPR002300">
    <property type="entry name" value="aa-tRNA-synth_Ia"/>
</dbReference>
<dbReference type="InterPro" id="IPR033708">
    <property type="entry name" value="Anticodon_Ile_BEm"/>
</dbReference>
<dbReference type="InterPro" id="IPR002301">
    <property type="entry name" value="Ile-tRNA-ligase"/>
</dbReference>
<dbReference type="InterPro" id="IPR023585">
    <property type="entry name" value="Ile-tRNA-ligase_type1"/>
</dbReference>
<dbReference type="InterPro" id="IPR050081">
    <property type="entry name" value="Ile-tRNA_ligase"/>
</dbReference>
<dbReference type="InterPro" id="IPR013155">
    <property type="entry name" value="M/V/L/I-tRNA-synth_anticd-bd"/>
</dbReference>
<dbReference type="InterPro" id="IPR014729">
    <property type="entry name" value="Rossmann-like_a/b/a_fold"/>
</dbReference>
<dbReference type="InterPro" id="IPR009080">
    <property type="entry name" value="tRNAsynth_Ia_anticodon-bd"/>
</dbReference>
<dbReference type="InterPro" id="IPR009008">
    <property type="entry name" value="Val/Leu/Ile-tRNA-synth_edit"/>
</dbReference>
<dbReference type="InterPro" id="IPR010663">
    <property type="entry name" value="Znf_FPG/IleRS"/>
</dbReference>
<dbReference type="NCBIfam" id="TIGR00392">
    <property type="entry name" value="ileS"/>
    <property type="match status" value="1"/>
</dbReference>
<dbReference type="PANTHER" id="PTHR42765:SF1">
    <property type="entry name" value="ISOLEUCINE--TRNA LIGASE, MITOCHONDRIAL"/>
    <property type="match status" value="1"/>
</dbReference>
<dbReference type="PANTHER" id="PTHR42765">
    <property type="entry name" value="SOLEUCYL-TRNA SYNTHETASE"/>
    <property type="match status" value="1"/>
</dbReference>
<dbReference type="Pfam" id="PF08264">
    <property type="entry name" value="Anticodon_1"/>
    <property type="match status" value="1"/>
</dbReference>
<dbReference type="Pfam" id="PF00133">
    <property type="entry name" value="tRNA-synt_1"/>
    <property type="match status" value="1"/>
</dbReference>
<dbReference type="Pfam" id="PF06827">
    <property type="entry name" value="zf-FPG_IleRS"/>
    <property type="match status" value="1"/>
</dbReference>
<dbReference type="PRINTS" id="PR00984">
    <property type="entry name" value="TRNASYNTHILE"/>
</dbReference>
<dbReference type="SUPFAM" id="SSF47323">
    <property type="entry name" value="Anticodon-binding domain of a subclass of class I aminoacyl-tRNA synthetases"/>
    <property type="match status" value="1"/>
</dbReference>
<dbReference type="SUPFAM" id="SSF52374">
    <property type="entry name" value="Nucleotidylyl transferase"/>
    <property type="match status" value="1"/>
</dbReference>
<dbReference type="SUPFAM" id="SSF50677">
    <property type="entry name" value="ValRS/IleRS/LeuRS editing domain"/>
    <property type="match status" value="1"/>
</dbReference>
<dbReference type="PROSITE" id="PS00178">
    <property type="entry name" value="AA_TRNA_LIGASE_I"/>
    <property type="match status" value="1"/>
</dbReference>
<keyword id="KW-0030">Aminoacyl-tRNA synthetase</keyword>
<keyword id="KW-0067">ATP-binding</keyword>
<keyword id="KW-0963">Cytoplasm</keyword>
<keyword id="KW-0436">Ligase</keyword>
<keyword id="KW-0479">Metal-binding</keyword>
<keyword id="KW-0547">Nucleotide-binding</keyword>
<keyword id="KW-0648">Protein biosynthesis</keyword>
<keyword id="KW-0862">Zinc</keyword>
<accession>B8J3R3</accession>
<proteinExistence type="inferred from homology"/>
<feature type="chain" id="PRO_1000189150" description="Isoleucine--tRNA ligase">
    <location>
        <begin position="1"/>
        <end position="938"/>
    </location>
</feature>
<feature type="short sequence motif" description="'HIGH' region">
    <location>
        <begin position="58"/>
        <end position="68"/>
    </location>
</feature>
<feature type="short sequence motif" description="'KMSKS' region">
    <location>
        <begin position="607"/>
        <end position="611"/>
    </location>
</feature>
<feature type="binding site" evidence="1">
    <location>
        <position position="566"/>
    </location>
    <ligand>
        <name>L-isoleucyl-5'-AMP</name>
        <dbReference type="ChEBI" id="CHEBI:178002"/>
    </ligand>
</feature>
<feature type="binding site" evidence="1">
    <location>
        <position position="610"/>
    </location>
    <ligand>
        <name>ATP</name>
        <dbReference type="ChEBI" id="CHEBI:30616"/>
    </ligand>
</feature>
<feature type="binding site" evidence="1">
    <location>
        <position position="906"/>
    </location>
    <ligand>
        <name>Zn(2+)</name>
        <dbReference type="ChEBI" id="CHEBI:29105"/>
    </ligand>
</feature>
<feature type="binding site" evidence="1">
    <location>
        <position position="909"/>
    </location>
    <ligand>
        <name>Zn(2+)</name>
        <dbReference type="ChEBI" id="CHEBI:29105"/>
    </ligand>
</feature>
<feature type="binding site" evidence="1">
    <location>
        <position position="926"/>
    </location>
    <ligand>
        <name>Zn(2+)</name>
        <dbReference type="ChEBI" id="CHEBI:29105"/>
    </ligand>
</feature>
<feature type="binding site" evidence="1">
    <location>
        <position position="929"/>
    </location>
    <ligand>
        <name>Zn(2+)</name>
        <dbReference type="ChEBI" id="CHEBI:29105"/>
    </ligand>
</feature>
<organism>
    <name type="scientific">Desulfovibrio desulfuricans (strain ATCC 27774 / DSM 6949 / MB)</name>
    <dbReference type="NCBI Taxonomy" id="525146"/>
    <lineage>
        <taxon>Bacteria</taxon>
        <taxon>Pseudomonadati</taxon>
        <taxon>Thermodesulfobacteriota</taxon>
        <taxon>Desulfovibrionia</taxon>
        <taxon>Desulfovibrionales</taxon>
        <taxon>Desulfovibrionaceae</taxon>
        <taxon>Desulfovibrio</taxon>
    </lineage>
</organism>
<comment type="function">
    <text evidence="1">Catalyzes the attachment of isoleucine to tRNA(Ile). As IleRS can inadvertently accommodate and process structurally similar amino acids such as valine, to avoid such errors it has two additional distinct tRNA(Ile)-dependent editing activities. One activity is designated as 'pretransfer' editing and involves the hydrolysis of activated Val-AMP. The other activity is designated 'posttransfer' editing and involves deacylation of mischarged Val-tRNA(Ile).</text>
</comment>
<comment type="catalytic activity">
    <reaction evidence="1">
        <text>tRNA(Ile) + L-isoleucine + ATP = L-isoleucyl-tRNA(Ile) + AMP + diphosphate</text>
        <dbReference type="Rhea" id="RHEA:11060"/>
        <dbReference type="Rhea" id="RHEA-COMP:9666"/>
        <dbReference type="Rhea" id="RHEA-COMP:9695"/>
        <dbReference type="ChEBI" id="CHEBI:30616"/>
        <dbReference type="ChEBI" id="CHEBI:33019"/>
        <dbReference type="ChEBI" id="CHEBI:58045"/>
        <dbReference type="ChEBI" id="CHEBI:78442"/>
        <dbReference type="ChEBI" id="CHEBI:78528"/>
        <dbReference type="ChEBI" id="CHEBI:456215"/>
        <dbReference type="EC" id="6.1.1.5"/>
    </reaction>
</comment>
<comment type="cofactor">
    <cofactor evidence="1">
        <name>Zn(2+)</name>
        <dbReference type="ChEBI" id="CHEBI:29105"/>
    </cofactor>
    <text evidence="1">Binds 1 zinc ion per subunit.</text>
</comment>
<comment type="subunit">
    <text evidence="1">Monomer.</text>
</comment>
<comment type="subcellular location">
    <subcellularLocation>
        <location evidence="1">Cytoplasm</location>
    </subcellularLocation>
</comment>
<comment type="domain">
    <text evidence="1">IleRS has two distinct active sites: one for aminoacylation and one for editing. The misactivated valine is translocated from the active site to the editing site, which sterically excludes the correctly activated isoleucine. The single editing site contains two valyl binding pockets, one specific for each substrate (Val-AMP or Val-tRNA(Ile)).</text>
</comment>
<comment type="similarity">
    <text evidence="1">Belongs to the class-I aminoacyl-tRNA synthetase family. IleS type 1 subfamily.</text>
</comment>
<sequence>MSDYKKTLNLPQTAFPMKANLAQREPEAIKKWEAANACAAMVEASGSEGTYILHDGPPYANGHLHMGHALNKILKDIIVKSRNMAGYASWYVPGWDCHGLPIEHKVEQDLKEKKKSLPAHVVRKLCREYANKWLDVQRKEFKRLGVLGDWDHPYISMDPAYEAVTAGELAKFVAAGGVARAKKPIYWCCSCHTALAEAEVEYNDHTSPSVYVRFALPDEGLKKVFAAADPARAHVVIWTTTPWTLPDNMAVCLHPEFTYALVEAEGSQYILAEELVASCAETFGWSEYTILDRATGERLEGLKARHPFYDRQSSLVLGLHVTLDAGTGCVHTAPGHGREDYDVALKYGLEIYSPMDDAGRFLPAVEFFAGLNVFEANPKVVEKLEEVGALLQKGKIRHSYPHCWRCKEPVIFRATTQWFISMEKNDLRTRALKAIDEEVRWIPAWGRERIHNMVEFRPDWCISRQRQWGVPILALLCEDCGEAWNDPAWMQEIAARFAKHPTGCDYWYEAELKDVVPEGLACPHCGGNHWKRETDILDVWFDSGTSFAAVLEKRPELGFPADLYLEGSDQHRGWFHSSLLVSEGTRGCAPYRAVLTHGYVVDGDGRKMSKSVGNVIAPQELIEKFGAEIVRLWVSSVEYREDIRLSDEILGRLVDAYRRIRNTCRFIMGNLSDITAHDLLSLDRLQPLDRFALDVAGRVHERVQQAYMDFDFHKVYHTLHNYCVTDLSSVYLDILKDRLYASAPHSDERRSAQTALWHILCLLLRDMAPVLSFTAEEIFSHLPESLRGPETTVFALPPLAAAPYLLDEGTRDDWNVLLAVRGAVTKAIEPMRREGIIGHSLDTRITLFVADELRQRLEGLHTDLRAVCIVSQLHLEALDRAPQAAYRDEEVAGLAIGVEKARGEKCERCWIYSTELGSDASHPALCPRCTAVIKGMES</sequence>
<protein>
    <recommendedName>
        <fullName evidence="1">Isoleucine--tRNA ligase</fullName>
        <ecNumber evidence="1">6.1.1.5</ecNumber>
    </recommendedName>
    <alternativeName>
        <fullName evidence="1">Isoleucyl-tRNA synthetase</fullName>
        <shortName evidence="1">IleRS</shortName>
    </alternativeName>
</protein>
<evidence type="ECO:0000255" key="1">
    <source>
        <dbReference type="HAMAP-Rule" id="MF_02002"/>
    </source>
</evidence>
<reference key="1">
    <citation type="submission" date="2009-01" db="EMBL/GenBank/DDBJ databases">
        <title>Complete sequence of Desulfovibrio desulfuricans subsp. desulfuricans str. ATCC 27774.</title>
        <authorList>
            <consortium name="US DOE Joint Genome Institute"/>
            <person name="Lucas S."/>
            <person name="Copeland A."/>
            <person name="Lapidus A."/>
            <person name="Glavina del Rio T."/>
            <person name="Tice H."/>
            <person name="Bruce D."/>
            <person name="Goodwin L."/>
            <person name="Pitluck S."/>
            <person name="Sims D."/>
            <person name="Lu M."/>
            <person name="Kiss H."/>
            <person name="Meineke L."/>
            <person name="Brettin T."/>
            <person name="Detter J.C."/>
            <person name="Han C."/>
            <person name="Larimer F."/>
            <person name="Land M."/>
            <person name="Hauser L."/>
            <person name="Kyrpides N."/>
            <person name="Ovchinnikova G."/>
            <person name="Hazen T.C."/>
        </authorList>
    </citation>
    <scope>NUCLEOTIDE SEQUENCE [LARGE SCALE GENOMIC DNA]</scope>
    <source>
        <strain>ATCC 27774 / DSM 6949 / MB</strain>
    </source>
</reference>